<name>NUOD_RHOPT</name>
<gene>
    <name evidence="1" type="primary">nuoD</name>
    <name type="ordered locus">Rpal_3297</name>
</gene>
<dbReference type="EC" id="7.1.1.-" evidence="1"/>
<dbReference type="EMBL" id="CP001096">
    <property type="protein sequence ID" value="ACF01799.1"/>
    <property type="molecule type" value="Genomic_DNA"/>
</dbReference>
<dbReference type="RefSeq" id="WP_012496378.1">
    <property type="nucleotide sequence ID" value="NC_011004.1"/>
</dbReference>
<dbReference type="SMR" id="B3Q7N3"/>
<dbReference type="KEGG" id="rpt:Rpal_3297"/>
<dbReference type="HOGENOM" id="CLU_015134_1_1_5"/>
<dbReference type="OrthoDB" id="9801496at2"/>
<dbReference type="Proteomes" id="UP000001725">
    <property type="component" value="Chromosome"/>
</dbReference>
<dbReference type="GO" id="GO:0005886">
    <property type="term" value="C:plasma membrane"/>
    <property type="evidence" value="ECO:0007669"/>
    <property type="project" value="UniProtKB-SubCell"/>
</dbReference>
<dbReference type="GO" id="GO:0051287">
    <property type="term" value="F:NAD binding"/>
    <property type="evidence" value="ECO:0007669"/>
    <property type="project" value="InterPro"/>
</dbReference>
<dbReference type="GO" id="GO:0050136">
    <property type="term" value="F:NADH:ubiquinone reductase (non-electrogenic) activity"/>
    <property type="evidence" value="ECO:0007669"/>
    <property type="project" value="UniProtKB-UniRule"/>
</dbReference>
<dbReference type="GO" id="GO:0048038">
    <property type="term" value="F:quinone binding"/>
    <property type="evidence" value="ECO:0007669"/>
    <property type="project" value="UniProtKB-KW"/>
</dbReference>
<dbReference type="FunFam" id="1.10.645.10:FF:000005">
    <property type="entry name" value="NADH-quinone oxidoreductase subunit D"/>
    <property type="match status" value="1"/>
</dbReference>
<dbReference type="Gene3D" id="1.10.645.10">
    <property type="entry name" value="Cytochrome-c3 Hydrogenase, chain B"/>
    <property type="match status" value="1"/>
</dbReference>
<dbReference type="HAMAP" id="MF_01358">
    <property type="entry name" value="NDH1_NuoD"/>
    <property type="match status" value="1"/>
</dbReference>
<dbReference type="InterPro" id="IPR001135">
    <property type="entry name" value="NADH_Q_OxRdtase_suD"/>
</dbReference>
<dbReference type="InterPro" id="IPR014029">
    <property type="entry name" value="NADH_UbQ_OxRdtase_49kDa_CS"/>
</dbReference>
<dbReference type="InterPro" id="IPR022885">
    <property type="entry name" value="NDH1_su_D/H"/>
</dbReference>
<dbReference type="InterPro" id="IPR029014">
    <property type="entry name" value="NiFe-Hase_large"/>
</dbReference>
<dbReference type="NCBIfam" id="TIGR01962">
    <property type="entry name" value="NuoD"/>
    <property type="match status" value="1"/>
</dbReference>
<dbReference type="NCBIfam" id="NF004739">
    <property type="entry name" value="PRK06075.1"/>
    <property type="match status" value="1"/>
</dbReference>
<dbReference type="PANTHER" id="PTHR11993:SF10">
    <property type="entry name" value="NADH DEHYDROGENASE [UBIQUINONE] IRON-SULFUR PROTEIN 2, MITOCHONDRIAL"/>
    <property type="match status" value="1"/>
</dbReference>
<dbReference type="PANTHER" id="PTHR11993">
    <property type="entry name" value="NADH-UBIQUINONE OXIDOREDUCTASE 49 KDA SUBUNIT"/>
    <property type="match status" value="1"/>
</dbReference>
<dbReference type="Pfam" id="PF00346">
    <property type="entry name" value="Complex1_49kDa"/>
    <property type="match status" value="1"/>
</dbReference>
<dbReference type="SUPFAM" id="SSF56762">
    <property type="entry name" value="HydB/Nqo4-like"/>
    <property type="match status" value="1"/>
</dbReference>
<dbReference type="PROSITE" id="PS00535">
    <property type="entry name" value="COMPLEX1_49K"/>
    <property type="match status" value="1"/>
</dbReference>
<feature type="chain" id="PRO_0000357908" description="NADH-quinone oxidoreductase subunit D">
    <location>
        <begin position="1"/>
        <end position="402"/>
    </location>
</feature>
<organism>
    <name type="scientific">Rhodopseudomonas palustris (strain TIE-1)</name>
    <dbReference type="NCBI Taxonomy" id="395960"/>
    <lineage>
        <taxon>Bacteria</taxon>
        <taxon>Pseudomonadati</taxon>
        <taxon>Pseudomonadota</taxon>
        <taxon>Alphaproteobacteria</taxon>
        <taxon>Hyphomicrobiales</taxon>
        <taxon>Nitrobacteraceae</taxon>
        <taxon>Rhodopseudomonas</taxon>
    </lineage>
</organism>
<accession>B3Q7N3</accession>
<keyword id="KW-0997">Cell inner membrane</keyword>
<keyword id="KW-1003">Cell membrane</keyword>
<keyword id="KW-0472">Membrane</keyword>
<keyword id="KW-0520">NAD</keyword>
<keyword id="KW-0874">Quinone</keyword>
<keyword id="KW-1278">Translocase</keyword>
<keyword id="KW-0813">Transport</keyword>
<keyword id="KW-0830">Ubiquinone</keyword>
<proteinExistence type="inferred from homology"/>
<evidence type="ECO:0000255" key="1">
    <source>
        <dbReference type="HAMAP-Rule" id="MF_01358"/>
    </source>
</evidence>
<protein>
    <recommendedName>
        <fullName evidence="1">NADH-quinone oxidoreductase subunit D</fullName>
        <ecNumber evidence="1">7.1.1.-</ecNumber>
    </recommendedName>
    <alternativeName>
        <fullName evidence="1">NADH dehydrogenase I subunit D</fullName>
    </alternativeName>
    <alternativeName>
        <fullName evidence="1">NDH-1 subunit D</fullName>
    </alternativeName>
</protein>
<comment type="function">
    <text evidence="1">NDH-1 shuttles electrons from NADH, via FMN and iron-sulfur (Fe-S) centers, to quinones in the respiratory chain. The immediate electron acceptor for the enzyme in this species is believed to be ubiquinone. Couples the redox reaction to proton translocation (for every two electrons transferred, four hydrogen ions are translocated across the cytoplasmic membrane), and thus conserves the redox energy in a proton gradient.</text>
</comment>
<comment type="catalytic activity">
    <reaction evidence="1">
        <text>a quinone + NADH + 5 H(+)(in) = a quinol + NAD(+) + 4 H(+)(out)</text>
        <dbReference type="Rhea" id="RHEA:57888"/>
        <dbReference type="ChEBI" id="CHEBI:15378"/>
        <dbReference type="ChEBI" id="CHEBI:24646"/>
        <dbReference type="ChEBI" id="CHEBI:57540"/>
        <dbReference type="ChEBI" id="CHEBI:57945"/>
        <dbReference type="ChEBI" id="CHEBI:132124"/>
    </reaction>
</comment>
<comment type="subunit">
    <text evidence="1">NDH-1 is composed of 14 different subunits. Subunits NuoB, C, D, E, F, and G constitute the peripheral sector of the complex.</text>
</comment>
<comment type="subcellular location">
    <subcellularLocation>
        <location evidence="1">Cell inner membrane</location>
        <topology evidence="1">Peripheral membrane protein</topology>
        <orientation evidence="1">Cytoplasmic side</orientation>
    </subcellularLocation>
</comment>
<comment type="similarity">
    <text evidence="1">Belongs to the complex I 49 kDa subunit family.</text>
</comment>
<sequence>MADAAAPDAASVRNFTINFGPQHPAAHGVLRLVLELDGEVVERVDPHIGLLHRGTEKLIEQKTYLQAIPYFDRLDYVAPMNQEHAFCLAVEKLLGIAVPRRAQLIRVLYAEIGRILSHLLNVTTQAMDVGALTPPLWGFEEREKLMMFYERASGSRMHAAYFRVGGVHQDLPPKLVDDIDAWCDAFPAVVNDLDRLLSDNRIFKQRNVDIGVVTLDQAWSWGFSGVMVRGSGAAWDLRKSQPYECYAELDFEVPIGKNGDCYDRYHIRMEEMRQSVRIMKQCIAKLRAPDGQGPVVVDDHKIFPPRRGEMKRSMEALIHHFKLYTEGFHVPAGEVYVAVEAPKGEFGVYLVSDGSNKPYKCKIRAPGFAHLQAMDFLSRGHLLADVSAILGSLDIVFGEVDR</sequence>
<reference key="1">
    <citation type="submission" date="2008-05" db="EMBL/GenBank/DDBJ databases">
        <title>Complete sequence of Rhodopseudomonas palustris TIE-1.</title>
        <authorList>
            <consortium name="US DOE Joint Genome Institute"/>
            <person name="Lucas S."/>
            <person name="Copeland A."/>
            <person name="Lapidus A."/>
            <person name="Glavina del Rio T."/>
            <person name="Dalin E."/>
            <person name="Tice H."/>
            <person name="Pitluck S."/>
            <person name="Chain P."/>
            <person name="Malfatti S."/>
            <person name="Shin M."/>
            <person name="Vergez L."/>
            <person name="Lang D."/>
            <person name="Schmutz J."/>
            <person name="Larimer F."/>
            <person name="Land M."/>
            <person name="Hauser L."/>
            <person name="Kyrpides N."/>
            <person name="Mikhailova N."/>
            <person name="Emerson D."/>
            <person name="Newman D.K."/>
            <person name="Roden E."/>
            <person name="Richardson P."/>
        </authorList>
    </citation>
    <scope>NUCLEOTIDE SEQUENCE [LARGE SCALE GENOMIC DNA]</scope>
    <source>
        <strain>TIE-1</strain>
    </source>
</reference>